<feature type="chain" id="PRO_0000415929" description="Potassium channel toxin alpha-KTx 23.1" evidence="1 3">
    <location>
        <begin position="1"/>
        <end position="36"/>
    </location>
</feature>
<feature type="site" description="Basic residue of the functional dyad">
    <location>
        <position position="25"/>
    </location>
</feature>
<feature type="site" description="Aromatic residue of the functional dyad">
    <location>
        <position position="34"/>
    </location>
</feature>
<feature type="modified residue" description="Cysteine amide" evidence="1 3">
    <location>
        <position position="36"/>
    </location>
</feature>
<feature type="disulfide bond" evidence="1 10">
    <location>
        <begin position="6"/>
        <end position="26"/>
    </location>
</feature>
<feature type="disulfide bond" evidence="1 10">
    <location>
        <begin position="12"/>
        <end position="31"/>
    </location>
</feature>
<feature type="disulfide bond" evidence="1 10">
    <location>
        <begin position="16"/>
        <end position="33"/>
    </location>
</feature>
<feature type="disulfide bond" evidence="1 10">
    <location>
        <begin position="21"/>
        <end position="36"/>
    </location>
</feature>
<feature type="strand" evidence="11">
    <location>
        <begin position="3"/>
        <end position="5"/>
    </location>
</feature>
<feature type="strand" evidence="11">
    <location>
        <begin position="8"/>
        <end position="10"/>
    </location>
</feature>
<feature type="helix" evidence="11">
    <location>
        <begin position="13"/>
        <end position="16"/>
    </location>
</feature>
<feature type="strand" evidence="11">
    <location>
        <begin position="22"/>
        <end position="34"/>
    </location>
</feature>
<proteinExistence type="evidence at protein level"/>
<reference key="1">
    <citation type="patent" date="2011-03-10" number="US0059064">
        <title>Vm23 and Vm24, two scorpion peptides that block human T-lymphocyte potassium channels sub-type K(v)1.3 w/high selectivity and decrease the in vivo DTH responses in rats.</title>
        <authorList>
            <person name="Possani L.D."/>
            <person name="Gurrola G.B."/>
            <person name="Salas-Castillo S.P."/>
            <person name="Batista C.V.F."/>
            <person name="Varga Z."/>
            <person name="Panyi G."/>
            <person name="Caspar R."/>
        </authorList>
    </citation>
    <scope>PROTEIN SEQUENCE</scope>
    <scope>SYNTHESIS</scope>
    <scope>FUNCTION</scope>
    <scope>DISULFIDE BONDS</scope>
    <scope>AMIDATION AT CYS-36</scope>
    <scope>IDENTIFICATION BY MASS SPECTROMETRY</scope>
    <scope>SUBCELLULAR LOCATION</scope>
    <source>
        <tissue>Venom</tissue>
    </source>
</reference>
<reference key="2">
    <citation type="journal article" date="2012" name="Biochemistry">
        <title>Structure, function, and chemical synthesis of vaejovis mexicanus peptide 24: a novel potent blocker of Kv1.3 potassium channels of human T lymphocytes.</title>
        <authorList>
            <person name="Gurrola G.B."/>
            <person name="Hernandez-Lopez R.A."/>
            <person name="Rodriguez de la Vega R.C."/>
            <person name="Varga Z."/>
            <person name="Batista C.V.F."/>
            <person name="Salas-Castillo S.P."/>
            <person name="Panyi G."/>
            <person name="del Rio-Portilla F."/>
            <person name="Possani L.D."/>
        </authorList>
    </citation>
    <scope>PROTEIN SEQUENCE</scope>
    <scope>SYNTHESIS</scope>
    <scope>FUNCTION</scope>
    <scope>DISULFIDE BONDS</scope>
    <scope>AMIDATION AT CYS-36</scope>
    <scope>MASS SPECTROMETRY</scope>
    <scope>STRUCTURE BY NMR</scope>
    <scope>SUBCELLULAR LOCATION</scope>
    <scope>NOMENCLATURE</scope>
    <source>
        <tissue>Venom</tissue>
    </source>
</reference>
<reference key="3">
    <citation type="journal article" date="2012" name="Mol. Pharmacol.">
        <title>Vm24, a natural immunosuppressant peptide potently and selectively blocks Kv1.3 potassium channels of human T Cells.</title>
        <authorList>
            <person name="Varga Z."/>
            <person name="Gurrola-Briones G."/>
            <person name="Papp F."/>
            <person name="Rodriguez de la Vega R.C."/>
            <person name="Pedraza-Alva G."/>
            <person name="Tajhya R.B."/>
            <person name="Gaspar R."/>
            <person name="Cardenas L."/>
            <person name="Rosenstein Y."/>
            <person name="Beeton C."/>
            <person name="Possani L.D."/>
            <person name="Panyi G."/>
        </authorList>
    </citation>
    <scope>FUNCTION</scope>
    <scope>SUBCELLULAR LOCATION</scope>
    <scope>NOMENCLATURE</scope>
    <source>
        <tissue>Venom</tissue>
    </source>
</reference>
<sequence>AAAISCVGSPECPPKCRAQGCKNGKCMNRKCECYYC</sequence>
<name>KA231_VAEMS</name>
<organism>
    <name type="scientific">Vaejovis mexicanus smithi</name>
    <name type="common">Mexican scorpion</name>
    <name type="synonym">Vaejovis smithi</name>
    <dbReference type="NCBI Taxonomy" id="1562928"/>
    <lineage>
        <taxon>Eukaryota</taxon>
        <taxon>Metazoa</taxon>
        <taxon>Ecdysozoa</taxon>
        <taxon>Arthropoda</taxon>
        <taxon>Chelicerata</taxon>
        <taxon>Arachnida</taxon>
        <taxon>Scorpiones</taxon>
        <taxon>Iurida</taxon>
        <taxon>Chactoidea</taxon>
        <taxon>Vaejovidae</taxon>
        <taxon>Vaejovis</taxon>
    </lineage>
</organism>
<comment type="function">
    <text evidence="1 2 3">Voltage-gated potassium channel inhibitor. Selectively and irreversibly binds (K(d)=2.9 pM) and blocks hKv1.3/KCNA3 potassium channels of human T-lymphocytes. Weakly blocks hKCa3.1/KCNN4, mKv1.1/KCNA1, and hKv1.2/KCNA2 channels. In vivo, high doses (200 ug) produce no symptoms of intoxication when injected into mice.</text>
</comment>
<comment type="subcellular location">
    <subcellularLocation>
        <location evidence="1 2 3">Secreted</location>
    </subcellularLocation>
</comment>
<comment type="tissue specificity">
    <text evidence="7 8 9">Expressed by the venom gland.</text>
</comment>
<comment type="domain">
    <text evidence="1">Has the CSalpha/beta fold, which comprises one or two short alpha helices connected to anti-parallel beta-sheets stabilized by three or four disulfide bonds.</text>
</comment>
<comment type="domain">
    <text evidence="6">Has the structural arrangement of an alpha-helix connected to antiparallel beta-sheets by disulfide bonds (CS-alpha/beta).</text>
</comment>
<comment type="mass spectrometry"/>
<comment type="miscellaneous">
    <text evidence="3">Negative results: does not block hKv1.4/KCNA4, hKv1.5/KCNA5, rKv2.1/KCNB1, hBK, hERG, Nav1.5/SCN5A channels when assayed at a concentration of 10 nM.</text>
</comment>
<comment type="similarity">
    <text evidence="6">Belongs to the short scorpion toxin superfamily. Potassium channel inhibitor family. Alpha-KTx 23 subfamily.</text>
</comment>
<keyword id="KW-0002">3D-structure</keyword>
<keyword id="KW-0027">Amidation</keyword>
<keyword id="KW-0903">Direct protein sequencing</keyword>
<keyword id="KW-1015">Disulfide bond</keyword>
<keyword id="KW-0872">Ion channel impairing toxin</keyword>
<keyword id="KW-0528">Neurotoxin</keyword>
<keyword id="KW-0632">Potassium channel impairing toxin</keyword>
<keyword id="KW-0964">Secreted</keyword>
<keyword id="KW-0800">Toxin</keyword>
<accession>P0DJ31</accession>
<protein>
    <recommendedName>
        <fullName evidence="4 5">Potassium channel toxin alpha-KTx 23.1</fullName>
    </recommendedName>
    <alternativeName>
        <fullName evidence="4 5">Toxin Vm24</fullName>
    </alternativeName>
    <alternativeName>
        <fullName>Toxin alpha-KTx 21.1</fullName>
    </alternativeName>
</protein>
<evidence type="ECO:0000269" key="1">
    <source>
    </source>
</evidence>
<evidence type="ECO:0000269" key="2">
    <source>
    </source>
</evidence>
<evidence type="ECO:0000269" key="3">
    <source ref="1"/>
</evidence>
<evidence type="ECO:0000303" key="4">
    <source>
    </source>
</evidence>
<evidence type="ECO:0000303" key="5">
    <source>
    </source>
</evidence>
<evidence type="ECO:0000305" key="6"/>
<evidence type="ECO:0000305" key="7">
    <source>
    </source>
</evidence>
<evidence type="ECO:0000305" key="8">
    <source>
    </source>
</evidence>
<evidence type="ECO:0000305" key="9">
    <source ref="1"/>
</evidence>
<evidence type="ECO:0000312" key="10">
    <source>
        <dbReference type="PDB" id="2K9O"/>
    </source>
</evidence>
<evidence type="ECO:0007829" key="11">
    <source>
        <dbReference type="PDB" id="2K9O"/>
    </source>
</evidence>
<dbReference type="PDB" id="2K9O">
    <property type="method" value="NMR"/>
    <property type="chains" value="A=1-36"/>
</dbReference>
<dbReference type="PDBsum" id="2K9O"/>
<dbReference type="BMRB" id="P0DJ31"/>
<dbReference type="SMR" id="P0DJ31"/>
<dbReference type="EvolutionaryTrace" id="P0DJ31"/>
<dbReference type="GO" id="GO:0005576">
    <property type="term" value="C:extracellular region"/>
    <property type="evidence" value="ECO:0007669"/>
    <property type="project" value="UniProtKB-SubCell"/>
</dbReference>
<dbReference type="GO" id="GO:0008200">
    <property type="term" value="F:ion channel inhibitor activity"/>
    <property type="evidence" value="ECO:0007669"/>
    <property type="project" value="InterPro"/>
</dbReference>
<dbReference type="GO" id="GO:0015459">
    <property type="term" value="F:potassium channel regulator activity"/>
    <property type="evidence" value="ECO:0007669"/>
    <property type="project" value="UniProtKB-KW"/>
</dbReference>
<dbReference type="GO" id="GO:0090729">
    <property type="term" value="F:toxin activity"/>
    <property type="evidence" value="ECO:0007669"/>
    <property type="project" value="UniProtKB-KW"/>
</dbReference>
<dbReference type="Gene3D" id="3.30.30.10">
    <property type="entry name" value="Knottin, scorpion toxin-like"/>
    <property type="match status" value="1"/>
</dbReference>
<dbReference type="InterPro" id="IPR036574">
    <property type="entry name" value="Scorpion_toxin-like_sf"/>
</dbReference>
<dbReference type="InterPro" id="IPR001947">
    <property type="entry name" value="Scorpion_toxinS_K_inh"/>
</dbReference>
<dbReference type="Pfam" id="PF00451">
    <property type="entry name" value="Toxin_2"/>
    <property type="match status" value="1"/>
</dbReference>
<dbReference type="PRINTS" id="PR00286">
    <property type="entry name" value="CHARYBDTOXIN"/>
</dbReference>
<dbReference type="SUPFAM" id="SSF57095">
    <property type="entry name" value="Scorpion toxin-like"/>
    <property type="match status" value="1"/>
</dbReference>
<dbReference type="PROSITE" id="PS01138">
    <property type="entry name" value="SCORP_SHORT_TOXIN"/>
    <property type="match status" value="1"/>
</dbReference>